<comment type="function">
    <text evidence="2">May play a role in septum formation.</text>
</comment>
<comment type="induction">
    <text evidence="2">Induced by albendazole and thiabendazole, which inhibit the GTPase activity of FtsZ and probably septum formation.</text>
</comment>
<comment type="disruption phenotype">
    <text evidence="1">Essential for growth.</text>
</comment>
<comment type="miscellaneous">
    <text>Was identified as a high-confidence drug target.</text>
</comment>
<feature type="chain" id="PRO_0000390676" description="Uncharacterized protein Rv3660c">
    <location>
        <begin position="1"/>
        <end position="350"/>
    </location>
</feature>
<organism>
    <name type="scientific">Mycobacterium tuberculosis (strain ATCC 25618 / H37Rv)</name>
    <dbReference type="NCBI Taxonomy" id="83332"/>
    <lineage>
        <taxon>Bacteria</taxon>
        <taxon>Bacillati</taxon>
        <taxon>Actinomycetota</taxon>
        <taxon>Actinomycetes</taxon>
        <taxon>Mycobacteriales</taxon>
        <taxon>Mycobacteriaceae</taxon>
        <taxon>Mycobacterium</taxon>
        <taxon>Mycobacterium tuberculosis complex</taxon>
    </lineage>
</organism>
<name>Y3660_MYCTU</name>
<accession>P9WKX7</accession>
<accession>L0TD64</accession>
<accession>O69628</accession>
<accession>Q7D546</accession>
<gene>
    <name type="ordered locus">Rv3660c</name>
</gene>
<proteinExistence type="evidence at transcript level"/>
<evidence type="ECO:0000269" key="1">
    <source>
    </source>
</evidence>
<evidence type="ECO:0000269" key="2">
    <source>
    </source>
</evidence>
<protein>
    <recommendedName>
        <fullName>Uncharacterized protein Rv3660c</fullName>
    </recommendedName>
</protein>
<keyword id="KW-1185">Reference proteome</keyword>
<reference key="1">
    <citation type="journal article" date="1998" name="Nature">
        <title>Deciphering the biology of Mycobacterium tuberculosis from the complete genome sequence.</title>
        <authorList>
            <person name="Cole S.T."/>
            <person name="Brosch R."/>
            <person name="Parkhill J."/>
            <person name="Garnier T."/>
            <person name="Churcher C.M."/>
            <person name="Harris D.E."/>
            <person name="Gordon S.V."/>
            <person name="Eiglmeier K."/>
            <person name="Gas S."/>
            <person name="Barry C.E. III"/>
            <person name="Tekaia F."/>
            <person name="Badcock K."/>
            <person name="Basham D."/>
            <person name="Brown D."/>
            <person name="Chillingworth T."/>
            <person name="Connor R."/>
            <person name="Davies R.M."/>
            <person name="Devlin K."/>
            <person name="Feltwell T."/>
            <person name="Gentles S."/>
            <person name="Hamlin N."/>
            <person name="Holroyd S."/>
            <person name="Hornsby T."/>
            <person name="Jagels K."/>
            <person name="Krogh A."/>
            <person name="McLean J."/>
            <person name="Moule S."/>
            <person name="Murphy L.D."/>
            <person name="Oliver S."/>
            <person name="Osborne J."/>
            <person name="Quail M.A."/>
            <person name="Rajandream M.A."/>
            <person name="Rogers J."/>
            <person name="Rutter S."/>
            <person name="Seeger K."/>
            <person name="Skelton S."/>
            <person name="Squares S."/>
            <person name="Squares R."/>
            <person name="Sulston J.E."/>
            <person name="Taylor K."/>
            <person name="Whitehead S."/>
            <person name="Barrell B.G."/>
        </authorList>
    </citation>
    <scope>NUCLEOTIDE SEQUENCE [LARGE SCALE GENOMIC DNA]</scope>
    <source>
        <strain>ATCC 25618 / H37Rv</strain>
    </source>
</reference>
<reference key="2">
    <citation type="journal article" date="2003" name="Mol. Microbiol.">
        <title>Genes required for mycobacterial growth defined by high density mutagenesis.</title>
        <authorList>
            <person name="Sassetti C.M."/>
            <person name="Boyd D.H."/>
            <person name="Rubin E.J."/>
        </authorList>
    </citation>
    <scope>DISRUPTION PHENOTYPE</scope>
    <source>
        <strain>ATCC 25618 / H37Rv</strain>
    </source>
</reference>
<reference key="3">
    <citation type="journal article" date="2006" name="Microbiology">
        <title>Identification of cell cycle regulators in Mycobacterium tuberculosis by inhibition of septum formation and global transcriptional analysis.</title>
        <authorList>
            <person name="Slayden R.A."/>
            <person name="Knudson D.L."/>
            <person name="Belisle J.T."/>
        </authorList>
    </citation>
    <scope>INDUCTION</scope>
    <scope>FUNCTION</scope>
    <source>
        <strain>ATCC 25618 / H37Rv</strain>
    </source>
</reference>
<reference key="4">
    <citation type="journal article" date="2008" name="BMC Syst. Biol.">
        <title>targetTB: a target identification pipeline for Mycobacterium tuberculosis through an interactome, reactome and genome-scale structural analysis.</title>
        <authorList>
            <person name="Raman K."/>
            <person name="Yeturu K."/>
            <person name="Chandra N."/>
        </authorList>
    </citation>
    <scope>IDENTIFICATION AS A DRUG TARGET [LARGE SCALE ANALYSIS]</scope>
</reference>
<dbReference type="EMBL" id="AL123456">
    <property type="protein sequence ID" value="CCP46483.1"/>
    <property type="molecule type" value="Genomic_DNA"/>
</dbReference>
<dbReference type="PIR" id="E70788">
    <property type="entry name" value="E70788"/>
</dbReference>
<dbReference type="RefSeq" id="NP_218177.1">
    <property type="nucleotide sequence ID" value="NC_000962.3"/>
</dbReference>
<dbReference type="SMR" id="P9WKX7"/>
<dbReference type="STRING" id="83332.Rv3660c"/>
<dbReference type="PaxDb" id="83332-Rv3660c"/>
<dbReference type="DNASU" id="885319"/>
<dbReference type="GeneID" id="885319"/>
<dbReference type="KEGG" id="mtu:Rv3660c"/>
<dbReference type="KEGG" id="mtv:RVBD_3660c"/>
<dbReference type="PATRIC" id="fig|83332.111.peg.4069"/>
<dbReference type="TubercuList" id="Rv3660c"/>
<dbReference type="eggNOG" id="COG0455">
    <property type="taxonomic scope" value="Bacteria"/>
</dbReference>
<dbReference type="InParanoid" id="P9WKX7"/>
<dbReference type="OrthoDB" id="3252838at2"/>
<dbReference type="Proteomes" id="UP000001584">
    <property type="component" value="Chromosome"/>
</dbReference>
<dbReference type="GO" id="GO:0009898">
    <property type="term" value="C:cytoplasmic side of plasma membrane"/>
    <property type="evidence" value="ECO:0000318"/>
    <property type="project" value="GO_Central"/>
</dbReference>
<dbReference type="GO" id="GO:0005829">
    <property type="term" value="C:cytosol"/>
    <property type="evidence" value="ECO:0007005"/>
    <property type="project" value="MTBBASE"/>
</dbReference>
<dbReference type="GO" id="GO:0005524">
    <property type="term" value="F:ATP binding"/>
    <property type="evidence" value="ECO:0000318"/>
    <property type="project" value="GO_Central"/>
</dbReference>
<dbReference type="GO" id="GO:0016887">
    <property type="term" value="F:ATP hydrolysis activity"/>
    <property type="evidence" value="ECO:0000318"/>
    <property type="project" value="GO_Central"/>
</dbReference>
<dbReference type="FunFam" id="3.40.50.300:FF:003301">
    <property type="entry name" value="Helicase/secretion CpaE-like protein"/>
    <property type="match status" value="1"/>
</dbReference>
<dbReference type="Gene3D" id="3.40.50.300">
    <property type="entry name" value="P-loop containing nucleotide triphosphate hydrolases"/>
    <property type="match status" value="1"/>
</dbReference>
<dbReference type="InterPro" id="IPR027417">
    <property type="entry name" value="P-loop_NTPase"/>
</dbReference>
<dbReference type="InterPro" id="IPR050625">
    <property type="entry name" value="ParA/MinD_ATPase"/>
</dbReference>
<dbReference type="InterPro" id="IPR022521">
    <property type="entry name" value="Ssd-like"/>
</dbReference>
<dbReference type="NCBIfam" id="TIGR03815">
    <property type="entry name" value="CpaE_hom_Actino"/>
    <property type="match status" value="1"/>
</dbReference>
<dbReference type="PANTHER" id="PTHR43384:SF11">
    <property type="entry name" value="SEPTUM SITE DETERMINING PROTEIN"/>
    <property type="match status" value="1"/>
</dbReference>
<dbReference type="PANTHER" id="PTHR43384">
    <property type="entry name" value="SEPTUM SITE-DETERMINING PROTEIN MIND HOMOLOG, CHLOROPLASTIC-RELATED"/>
    <property type="match status" value="1"/>
</dbReference>
<dbReference type="SUPFAM" id="SSF52540">
    <property type="entry name" value="P-loop containing nucleoside triphosphate hydrolases"/>
    <property type="match status" value="1"/>
</dbReference>
<sequence>MLTDPGLRDELDRVAAAVGVRVVHLGGRHPVSRKTWSAAAAVVLDHAAADRCGRLALPRRTHVSVLTGTEAATATWAAAITVGAQHVLRMPEQEGELVRELAEAAESARDDGICGAVVAVIGGRGGAGASLFAVALAQAAADALLVDLDPWAGGIDLLVGGETAPGLRWPDLALQGGRLNWSAVRAALPRPRGISVLSGTRRGYELDAGPVDAVIDAGRRGGVTVVCDLPRRLTDATQAALDAADLVVLVSPCDVRACAAAATMAPVLTAINPNLGLVVRGPSPGGLRAAEVADVAGVPLLASMRAQPRLAEQLEHGGLRLRRRSVLASAARRVLGVLPRAGSGRHGRAA</sequence>